<comment type="function">
    <text>Troponin is the central regulatory protein of muscle contraction. Tn consists of three components: Tn-I which is the inhibitor of actomyosin ATPase, Tn-T which contains the binding site for tropomyosin and Tn-C. The binding of calcium to Tn-C abolishes the inhibitory action of Tn on actin filaments.</text>
</comment>
<comment type="similarity">
    <text evidence="3">Belongs to the troponin C family.</text>
</comment>
<keyword id="KW-0007">Acetylation</keyword>
<keyword id="KW-0106">Calcium</keyword>
<keyword id="KW-0903">Direct protein sequencing</keyword>
<keyword id="KW-0479">Metal-binding</keyword>
<keyword id="KW-0514">Muscle protein</keyword>
<keyword id="KW-0677">Repeat</keyword>
<accession>P06706</accession>
<protein>
    <recommendedName>
        <fullName>Troponin C, body wall muscle</fullName>
    </recommendedName>
</protein>
<feature type="chain" id="PRO_0000073689" description="Troponin C, body wall muscle">
    <location>
        <begin position="1"/>
        <end position="155"/>
    </location>
</feature>
<feature type="domain" description="EF-hand 1" evidence="1">
    <location>
        <begin position="7"/>
        <end position="43"/>
    </location>
</feature>
<feature type="domain" description="EF-hand 2" evidence="1">
    <location>
        <begin position="44"/>
        <end position="79"/>
    </location>
</feature>
<feature type="domain" description="EF-hand 3" evidence="1">
    <location>
        <begin position="88"/>
        <end position="121"/>
    </location>
</feature>
<feature type="domain" description="EF-hand 4" evidence="1">
    <location>
        <begin position="122"/>
        <end position="155"/>
    </location>
</feature>
<feature type="binding site" evidence="1">
    <location>
        <position position="57"/>
    </location>
    <ligand>
        <name>Ca(2+)</name>
        <dbReference type="ChEBI" id="CHEBI:29108"/>
        <label>1</label>
    </ligand>
</feature>
<feature type="binding site" evidence="1">
    <location>
        <position position="59"/>
    </location>
    <ligand>
        <name>Ca(2+)</name>
        <dbReference type="ChEBI" id="CHEBI:29108"/>
        <label>1</label>
    </ligand>
</feature>
<feature type="binding site" evidence="1">
    <location>
        <position position="61"/>
    </location>
    <ligand>
        <name>Ca(2+)</name>
        <dbReference type="ChEBI" id="CHEBI:29108"/>
        <label>1</label>
    </ligand>
</feature>
<feature type="binding site" evidence="1">
    <location>
        <position position="63"/>
    </location>
    <ligand>
        <name>Ca(2+)</name>
        <dbReference type="ChEBI" id="CHEBI:29108"/>
        <label>1</label>
    </ligand>
</feature>
<feature type="binding site" evidence="1">
    <location>
        <position position="68"/>
    </location>
    <ligand>
        <name>Ca(2+)</name>
        <dbReference type="ChEBI" id="CHEBI:29108"/>
        <label>1</label>
    </ligand>
</feature>
<feature type="binding site" evidence="3">
    <location>
        <position position="135"/>
    </location>
    <ligand>
        <name>Ca(2+)</name>
        <dbReference type="ChEBI" id="CHEBI:29108"/>
        <label>2</label>
    </ligand>
</feature>
<feature type="binding site" evidence="3">
    <location>
        <position position="137"/>
    </location>
    <ligand>
        <name>Ca(2+)</name>
        <dbReference type="ChEBI" id="CHEBI:29108"/>
        <label>2</label>
    </ligand>
</feature>
<feature type="binding site" evidence="3">
    <location>
        <position position="139"/>
    </location>
    <ligand>
        <name>Ca(2+)</name>
        <dbReference type="ChEBI" id="CHEBI:29108"/>
        <label>2</label>
    </ligand>
</feature>
<feature type="binding site" evidence="3">
    <location>
        <position position="141"/>
    </location>
    <ligand>
        <name>Ca(2+)</name>
        <dbReference type="ChEBI" id="CHEBI:29108"/>
        <label>2</label>
    </ligand>
</feature>
<feature type="binding site" evidence="3">
    <location>
        <position position="146"/>
    </location>
    <ligand>
        <name>Ca(2+)</name>
        <dbReference type="ChEBI" id="CHEBI:29108"/>
        <label>2</label>
    </ligand>
</feature>
<feature type="modified residue" description="N-acetylvaline" evidence="2">
    <location>
        <position position="1"/>
    </location>
</feature>
<reference key="1">
    <citation type="journal article" date="1983" name="J. Biochem.">
        <title>Amino acid sequence of troponin C obtained from ascidian (Halocynthia roretzi) body wall muscle.</title>
        <authorList>
            <person name="Takagi T."/>
            <person name="Konishi K."/>
        </authorList>
    </citation>
    <scope>PROTEIN SEQUENCE</scope>
    <scope>ACETYLATION AT VAL-1</scope>
</reference>
<proteinExistence type="evidence at protein level"/>
<evidence type="ECO:0000255" key="1">
    <source>
        <dbReference type="PROSITE-ProRule" id="PRU00448"/>
    </source>
</evidence>
<evidence type="ECO:0000269" key="2">
    <source>
    </source>
</evidence>
<evidence type="ECO:0000305" key="3"/>
<dbReference type="PIR" id="A28853">
    <property type="entry name" value="A28853"/>
</dbReference>
<dbReference type="SMR" id="P06706"/>
<dbReference type="iPTMnet" id="P06706"/>
<dbReference type="GO" id="GO:0016460">
    <property type="term" value="C:myosin II complex"/>
    <property type="evidence" value="ECO:0007669"/>
    <property type="project" value="TreeGrafter"/>
</dbReference>
<dbReference type="GO" id="GO:0005509">
    <property type="term" value="F:calcium ion binding"/>
    <property type="evidence" value="ECO:0007669"/>
    <property type="project" value="InterPro"/>
</dbReference>
<dbReference type="CDD" id="cd00051">
    <property type="entry name" value="EFh"/>
    <property type="match status" value="2"/>
</dbReference>
<dbReference type="FunFam" id="1.10.238.10:FF:000107">
    <property type="entry name" value="Troponin C, skeletal muscle"/>
    <property type="match status" value="1"/>
</dbReference>
<dbReference type="Gene3D" id="1.10.238.10">
    <property type="entry name" value="EF-hand"/>
    <property type="match status" value="2"/>
</dbReference>
<dbReference type="InterPro" id="IPR050230">
    <property type="entry name" value="CALM/Myosin/TropC-like"/>
</dbReference>
<dbReference type="InterPro" id="IPR011992">
    <property type="entry name" value="EF-hand-dom_pair"/>
</dbReference>
<dbReference type="InterPro" id="IPR018247">
    <property type="entry name" value="EF_Hand_1_Ca_BS"/>
</dbReference>
<dbReference type="InterPro" id="IPR002048">
    <property type="entry name" value="EF_hand_dom"/>
</dbReference>
<dbReference type="PANTHER" id="PTHR23048">
    <property type="entry name" value="MYOSIN LIGHT CHAIN 1, 3"/>
    <property type="match status" value="1"/>
</dbReference>
<dbReference type="PANTHER" id="PTHR23048:SF47">
    <property type="entry name" value="TROPONIN C1, SLOW SKELETAL AND CARDIAC TYPE"/>
    <property type="match status" value="1"/>
</dbReference>
<dbReference type="Pfam" id="PF13499">
    <property type="entry name" value="EF-hand_7"/>
    <property type="match status" value="1"/>
</dbReference>
<dbReference type="Pfam" id="PF13833">
    <property type="entry name" value="EF-hand_8"/>
    <property type="match status" value="1"/>
</dbReference>
<dbReference type="SMART" id="SM00054">
    <property type="entry name" value="EFh"/>
    <property type="match status" value="4"/>
</dbReference>
<dbReference type="SUPFAM" id="SSF47473">
    <property type="entry name" value="EF-hand"/>
    <property type="match status" value="1"/>
</dbReference>
<dbReference type="PROSITE" id="PS00018">
    <property type="entry name" value="EF_HAND_1"/>
    <property type="match status" value="1"/>
</dbReference>
<dbReference type="PROSITE" id="PS50222">
    <property type="entry name" value="EF_HAND_2"/>
    <property type="match status" value="4"/>
</dbReference>
<organism>
    <name type="scientific">Halocynthia roretzi</name>
    <name type="common">Sea squirt</name>
    <name type="synonym">Cynthia roretzi</name>
    <dbReference type="NCBI Taxonomy" id="7729"/>
    <lineage>
        <taxon>Eukaryota</taxon>
        <taxon>Metazoa</taxon>
        <taxon>Chordata</taxon>
        <taxon>Tunicata</taxon>
        <taxon>Ascidiacea</taxon>
        <taxon>Stolidobranchia</taxon>
        <taxon>Pyuridae</taxon>
        <taxon>Halocynthia</taxon>
    </lineage>
</organism>
<name>TNNC_HALRO</name>
<sequence length="155" mass="17749">VEHLTEDEKSQFRAAFDIFVADAKDGTISSKELGKVMKMLGQNPTEKDLQEMIEEVDIDGSGTIDFEEFCLMMYRQMQAQEEAKIPEREEKELSEAFRLFDLDGDGIGDELKAALDGTGENVETWEVDEMMADGDKNHDSQIDYEEWVTMMKFVQ</sequence>